<name>PSS2_ORYSJ</name>
<comment type="function">
    <text evidence="1">Catalyzes a base-exchange reaction in which the polar head group of phosphatidylethanolamine (PE) or phosphatidylcholine (PC) is replaced by L-serine.</text>
</comment>
<comment type="catalytic activity">
    <reaction>
        <text>a CDP-1,2-diacyl-sn-glycerol + L-serine = a 1,2-diacyl-sn-glycero-3-phospho-L-serine + CMP + H(+)</text>
        <dbReference type="Rhea" id="RHEA:16913"/>
        <dbReference type="ChEBI" id="CHEBI:15378"/>
        <dbReference type="ChEBI" id="CHEBI:33384"/>
        <dbReference type="ChEBI" id="CHEBI:57262"/>
        <dbReference type="ChEBI" id="CHEBI:58332"/>
        <dbReference type="ChEBI" id="CHEBI:60377"/>
        <dbReference type="EC" id="2.7.8.8"/>
    </reaction>
</comment>
<comment type="pathway">
    <text>Phospholipid metabolism; phosphatidylethanolamine biosynthesis; phosphatidylethanolamine from CDP-diacylglycerol: step 1/2.</text>
</comment>
<comment type="subcellular location">
    <subcellularLocation>
        <location evidence="1">Endoplasmic reticulum membrane</location>
        <topology evidence="4">Multi-pass membrane protein</topology>
    </subcellularLocation>
</comment>
<comment type="alternative products">
    <event type="alternative splicing"/>
    <isoform>
        <id>Q6I628-1</id>
        <name>1</name>
        <sequence type="displayed"/>
    </isoform>
    <isoform>
        <id>Q6I628-2</id>
        <name>2</name>
        <sequence type="described" ref="VSP_054967"/>
    </isoform>
</comment>
<comment type="similarity">
    <text evidence="4">Belongs to the CDP-alcohol phosphatidyltransferase class-I family.</text>
</comment>
<keyword id="KW-0025">Alternative splicing</keyword>
<keyword id="KW-0256">Endoplasmic reticulum</keyword>
<keyword id="KW-0444">Lipid biosynthesis</keyword>
<keyword id="KW-0443">Lipid metabolism</keyword>
<keyword id="KW-0472">Membrane</keyword>
<keyword id="KW-0594">Phospholipid biosynthesis</keyword>
<keyword id="KW-1208">Phospholipid metabolism</keyword>
<keyword id="KW-1185">Reference proteome</keyword>
<keyword id="KW-0808">Transferase</keyword>
<keyword id="KW-0812">Transmembrane</keyword>
<keyword id="KW-1133">Transmembrane helix</keyword>
<organism>
    <name type="scientific">Oryza sativa subsp. japonica</name>
    <name type="common">Rice</name>
    <dbReference type="NCBI Taxonomy" id="39947"/>
    <lineage>
        <taxon>Eukaryota</taxon>
        <taxon>Viridiplantae</taxon>
        <taxon>Streptophyta</taxon>
        <taxon>Embryophyta</taxon>
        <taxon>Tracheophyta</taxon>
        <taxon>Spermatophyta</taxon>
        <taxon>Magnoliopsida</taxon>
        <taxon>Liliopsida</taxon>
        <taxon>Poales</taxon>
        <taxon>Poaceae</taxon>
        <taxon>BOP clade</taxon>
        <taxon>Oryzoideae</taxon>
        <taxon>Oryzeae</taxon>
        <taxon>Oryzinae</taxon>
        <taxon>Oryza</taxon>
        <taxon>Oryza sativa</taxon>
    </lineage>
</organism>
<feature type="chain" id="PRO_0000429528" description="CDP-diacylglycerol--serine O-phosphatidyltransferase 2">
    <location>
        <begin position="1"/>
        <end position="423"/>
    </location>
</feature>
<feature type="transmembrane region" description="Helical" evidence="2">
    <location>
        <begin position="38"/>
        <end position="58"/>
    </location>
</feature>
<feature type="transmembrane region" description="Helical" evidence="2">
    <location>
        <begin position="77"/>
        <end position="97"/>
    </location>
</feature>
<feature type="transmembrane region" description="Helical" evidence="2">
    <location>
        <begin position="103"/>
        <end position="123"/>
    </location>
</feature>
<feature type="transmembrane region" description="Helical" evidence="2">
    <location>
        <begin position="195"/>
        <end position="215"/>
    </location>
</feature>
<feature type="transmembrane region" description="Helical" evidence="2">
    <location>
        <begin position="222"/>
        <end position="242"/>
    </location>
</feature>
<feature type="transmembrane region" description="Helical" evidence="2">
    <location>
        <begin position="294"/>
        <end position="314"/>
    </location>
</feature>
<feature type="transmembrane region" description="Helical" evidence="2">
    <location>
        <begin position="319"/>
        <end position="339"/>
    </location>
</feature>
<feature type="transmembrane region" description="Helical" evidence="2">
    <location>
        <begin position="359"/>
        <end position="379"/>
    </location>
</feature>
<feature type="transmembrane region" description="Helical" evidence="2">
    <location>
        <begin position="390"/>
        <end position="410"/>
    </location>
</feature>
<feature type="splice variant" id="VSP_054967" description="In isoform 2." evidence="3">
    <location>
        <position position="170"/>
    </location>
</feature>
<feature type="sequence conflict" description="In Ref. 7; AK107427." evidence="4" ref="7">
    <original>H</original>
    <variation>L</variation>
    <location>
        <position position="108"/>
    </location>
</feature>
<feature type="sequence conflict" description="In Ref. 7; AK107427." evidence="4" ref="7">
    <original>Y</original>
    <variation>H</variation>
    <location>
        <position position="149"/>
    </location>
</feature>
<evidence type="ECO:0000250" key="1"/>
<evidence type="ECO:0000255" key="2"/>
<evidence type="ECO:0000303" key="3">
    <source>
    </source>
</evidence>
<evidence type="ECO:0000305" key="4"/>
<protein>
    <recommendedName>
        <fullName>CDP-diacylglycerol--serine O-phosphatidyltransferase 2</fullName>
        <ecNumber>2.7.8.8</ecNumber>
    </recommendedName>
    <alternativeName>
        <fullName>Phosphatidylserine synthase 2</fullName>
    </alternativeName>
</protein>
<sequence>MEAKQRTRHRDGEERRLVAAADGGAEEYDPWTAWLYKPHTISVLLVGACLLIWASGALDPEGASYHSSATSIKRGVWAMIAVFLAYCTLQAPSTILIRPHPAVWRLVHGLAVVYLVALAFLLFQNRDDARQFMKHLYPDLGVELPERSYGADCRLYVPENPKNKFINIYETLFDEFVVAHILGWWGKAVMIRNQLLLWVLSIGFELMELTFRHMLPNFNECWWDSIILDILICNWFGIWAGMHTVRYFDGKTYEWVGLSRQPSIMGKVKRSLSQFTPAQWDKDQWYPFMGPLRFVQVLFLCVVFMTVELNTFFLKFCLWIPPRNPLVVYRLILWWLIAIPTIREYNSYLQNSKPVKKVGAFCWLSLAICIVELLICMKFGHGLFHDPMPTWLIIFWSSVGVALVVFLLAWSWRNHLKYQRKRL</sequence>
<reference key="1">
    <citation type="submission" date="2011-11" db="EMBL/GenBank/DDBJ databases">
        <title>Control of meristem activity during stem development through phosphatidyl serine synthases in rice.</title>
        <authorList>
            <person name="Yin H."/>
            <person name="Gao P."/>
            <person name="Luo D."/>
        </authorList>
    </citation>
    <scope>NUCLEOTIDE SEQUENCE [MRNA] (ISOFORM 1)</scope>
    <source>
        <strain>cv. Zhonghua 11</strain>
    </source>
</reference>
<reference key="2">
    <citation type="journal article" date="2005" name="Mol. Genet. Genomics">
        <title>A fine physical map of the rice chromosome 5.</title>
        <authorList>
            <person name="Cheng C.-H."/>
            <person name="Chung M.C."/>
            <person name="Liu S.-M."/>
            <person name="Chen S.-K."/>
            <person name="Kao F.Y."/>
            <person name="Lin S.-J."/>
            <person name="Hsiao S.-H."/>
            <person name="Tseng I.C."/>
            <person name="Hsing Y.-I.C."/>
            <person name="Wu H.-P."/>
            <person name="Chen C.-S."/>
            <person name="Shaw J.-F."/>
            <person name="Wu J."/>
            <person name="Matsumoto T."/>
            <person name="Sasaki T."/>
            <person name="Chen H.-C."/>
            <person name="Chow T.-Y."/>
        </authorList>
    </citation>
    <scope>NUCLEOTIDE SEQUENCE [LARGE SCALE GENOMIC DNA]</scope>
    <source>
        <strain>cv. Nipponbare</strain>
    </source>
</reference>
<reference key="3">
    <citation type="journal article" date="2005" name="Nature">
        <title>The map-based sequence of the rice genome.</title>
        <authorList>
            <consortium name="International rice genome sequencing project (IRGSP)"/>
        </authorList>
    </citation>
    <scope>NUCLEOTIDE SEQUENCE [LARGE SCALE GENOMIC DNA]</scope>
    <source>
        <strain>cv. Nipponbare</strain>
    </source>
</reference>
<reference key="4">
    <citation type="journal article" date="2008" name="Nucleic Acids Res.">
        <title>The rice annotation project database (RAP-DB): 2008 update.</title>
        <authorList>
            <consortium name="The rice annotation project (RAP)"/>
        </authorList>
    </citation>
    <scope>GENOME REANNOTATION</scope>
    <source>
        <strain>cv. Nipponbare</strain>
    </source>
</reference>
<reference key="5">
    <citation type="journal article" date="2013" name="Rice">
        <title>Improvement of the Oryza sativa Nipponbare reference genome using next generation sequence and optical map data.</title>
        <authorList>
            <person name="Kawahara Y."/>
            <person name="de la Bastide M."/>
            <person name="Hamilton J.P."/>
            <person name="Kanamori H."/>
            <person name="McCombie W.R."/>
            <person name="Ouyang S."/>
            <person name="Schwartz D.C."/>
            <person name="Tanaka T."/>
            <person name="Wu J."/>
            <person name="Zhou S."/>
            <person name="Childs K.L."/>
            <person name="Davidson R.M."/>
            <person name="Lin H."/>
            <person name="Quesada-Ocampo L."/>
            <person name="Vaillancourt B."/>
            <person name="Sakai H."/>
            <person name="Lee S.S."/>
            <person name="Kim J."/>
            <person name="Numa H."/>
            <person name="Itoh T."/>
            <person name="Buell C.R."/>
            <person name="Matsumoto T."/>
        </authorList>
    </citation>
    <scope>GENOME REANNOTATION</scope>
    <source>
        <strain>cv. Nipponbare</strain>
    </source>
</reference>
<reference key="6">
    <citation type="journal article" date="2005" name="PLoS Biol.">
        <title>The genomes of Oryza sativa: a history of duplications.</title>
        <authorList>
            <person name="Yu J."/>
            <person name="Wang J."/>
            <person name="Lin W."/>
            <person name="Li S."/>
            <person name="Li H."/>
            <person name="Zhou J."/>
            <person name="Ni P."/>
            <person name="Dong W."/>
            <person name="Hu S."/>
            <person name="Zeng C."/>
            <person name="Zhang J."/>
            <person name="Zhang Y."/>
            <person name="Li R."/>
            <person name="Xu Z."/>
            <person name="Li S."/>
            <person name="Li X."/>
            <person name="Zheng H."/>
            <person name="Cong L."/>
            <person name="Lin L."/>
            <person name="Yin J."/>
            <person name="Geng J."/>
            <person name="Li G."/>
            <person name="Shi J."/>
            <person name="Liu J."/>
            <person name="Lv H."/>
            <person name="Li J."/>
            <person name="Wang J."/>
            <person name="Deng Y."/>
            <person name="Ran L."/>
            <person name="Shi X."/>
            <person name="Wang X."/>
            <person name="Wu Q."/>
            <person name="Li C."/>
            <person name="Ren X."/>
            <person name="Wang J."/>
            <person name="Wang X."/>
            <person name="Li D."/>
            <person name="Liu D."/>
            <person name="Zhang X."/>
            <person name="Ji Z."/>
            <person name="Zhao W."/>
            <person name="Sun Y."/>
            <person name="Zhang Z."/>
            <person name="Bao J."/>
            <person name="Han Y."/>
            <person name="Dong L."/>
            <person name="Ji J."/>
            <person name="Chen P."/>
            <person name="Wu S."/>
            <person name="Liu J."/>
            <person name="Xiao Y."/>
            <person name="Bu D."/>
            <person name="Tan J."/>
            <person name="Yang L."/>
            <person name="Ye C."/>
            <person name="Zhang J."/>
            <person name="Xu J."/>
            <person name="Zhou Y."/>
            <person name="Yu Y."/>
            <person name="Zhang B."/>
            <person name="Zhuang S."/>
            <person name="Wei H."/>
            <person name="Liu B."/>
            <person name="Lei M."/>
            <person name="Yu H."/>
            <person name="Li Y."/>
            <person name="Xu H."/>
            <person name="Wei S."/>
            <person name="He X."/>
            <person name="Fang L."/>
            <person name="Zhang Z."/>
            <person name="Zhang Y."/>
            <person name="Huang X."/>
            <person name="Su Z."/>
            <person name="Tong W."/>
            <person name="Li J."/>
            <person name="Tong Z."/>
            <person name="Li S."/>
            <person name="Ye J."/>
            <person name="Wang L."/>
            <person name="Fang L."/>
            <person name="Lei T."/>
            <person name="Chen C.-S."/>
            <person name="Chen H.-C."/>
            <person name="Xu Z."/>
            <person name="Li H."/>
            <person name="Huang H."/>
            <person name="Zhang F."/>
            <person name="Xu H."/>
            <person name="Li N."/>
            <person name="Zhao C."/>
            <person name="Li S."/>
            <person name="Dong L."/>
            <person name="Huang Y."/>
            <person name="Li L."/>
            <person name="Xi Y."/>
            <person name="Qi Q."/>
            <person name="Li W."/>
            <person name="Zhang B."/>
            <person name="Hu W."/>
            <person name="Zhang Y."/>
            <person name="Tian X."/>
            <person name="Jiao Y."/>
            <person name="Liang X."/>
            <person name="Jin J."/>
            <person name="Gao L."/>
            <person name="Zheng W."/>
            <person name="Hao B."/>
            <person name="Liu S.-M."/>
            <person name="Wang W."/>
            <person name="Yuan L."/>
            <person name="Cao M."/>
            <person name="McDermott J."/>
            <person name="Samudrala R."/>
            <person name="Wang J."/>
            <person name="Wong G.K.-S."/>
            <person name="Yang H."/>
        </authorList>
    </citation>
    <scope>NUCLEOTIDE SEQUENCE [LARGE SCALE GENOMIC DNA]</scope>
    <source>
        <strain>cv. Nipponbare</strain>
    </source>
</reference>
<reference key="7">
    <citation type="journal article" date="2003" name="Science">
        <title>Collection, mapping, and annotation of over 28,000 cDNA clones from japonica rice.</title>
        <authorList>
            <consortium name="The rice full-length cDNA consortium"/>
        </authorList>
    </citation>
    <scope>NUCLEOTIDE SEQUENCE [LARGE SCALE MRNA] (ISOFORM 2)</scope>
    <source>
        <strain>cv. Nipponbare</strain>
    </source>
</reference>
<accession>Q6I628</accession>
<accession>H9BZX3</accession>
<proteinExistence type="evidence at transcript level"/>
<gene>
    <name type="primary">PSS2</name>
    <name type="ordered locus">Os05g0554400</name>
    <name type="ordered locus">LOC_Os05g48060</name>
    <name type="ORF">OJ1263_E10.9</name>
    <name type="ORF">OsJ_19482</name>
</gene>
<dbReference type="EC" id="2.7.8.8"/>
<dbReference type="EMBL" id="JQ173372">
    <property type="protein sequence ID" value="AFD96992.1"/>
    <property type="molecule type" value="mRNA"/>
</dbReference>
<dbReference type="EMBL" id="AC093956">
    <property type="protein sequence ID" value="AAT58731.1"/>
    <property type="molecule type" value="Genomic_DNA"/>
</dbReference>
<dbReference type="EMBL" id="AP008211">
    <property type="protein sequence ID" value="BAF18183.1"/>
    <property type="molecule type" value="Genomic_DNA"/>
</dbReference>
<dbReference type="EMBL" id="AP014961">
    <property type="protein sequence ID" value="BAS95249.1"/>
    <property type="molecule type" value="Genomic_DNA"/>
</dbReference>
<dbReference type="EMBL" id="CM000142">
    <property type="protein sequence ID" value="EEE64630.1"/>
    <property type="molecule type" value="Genomic_DNA"/>
</dbReference>
<dbReference type="EMBL" id="AK107427">
    <property type="status" value="NOT_ANNOTATED_CDS"/>
    <property type="molecule type" value="mRNA"/>
</dbReference>
<dbReference type="RefSeq" id="XP_015637466.1">
    <molecule id="Q6I628-1"/>
    <property type="nucleotide sequence ID" value="XM_015781980.1"/>
</dbReference>
<dbReference type="SMR" id="Q6I628"/>
<dbReference type="FunCoup" id="Q6I628">
    <property type="interactions" value="579"/>
</dbReference>
<dbReference type="STRING" id="39947.Q6I628"/>
<dbReference type="PaxDb" id="39947-Q6I628"/>
<dbReference type="GeneID" id="4339554"/>
<dbReference type="KEGG" id="dosa:Os05g0554400"/>
<dbReference type="KEGG" id="osa:4339554"/>
<dbReference type="eggNOG" id="KOG2735">
    <property type="taxonomic scope" value="Eukaryota"/>
</dbReference>
<dbReference type="HOGENOM" id="CLU_037661_1_1_1"/>
<dbReference type="InParanoid" id="Q6I628"/>
<dbReference type="OMA" id="YMENCNS"/>
<dbReference type="OrthoDB" id="10265393at2759"/>
<dbReference type="PlantReactome" id="R-OSA-1119402">
    <property type="pathway name" value="Phospholipid biosynthesis I"/>
</dbReference>
<dbReference type="UniPathway" id="UPA00558">
    <property type="reaction ID" value="UER00615"/>
</dbReference>
<dbReference type="Proteomes" id="UP000000763">
    <property type="component" value="Chromosome 5"/>
</dbReference>
<dbReference type="Proteomes" id="UP000007752">
    <property type="component" value="Chromosome 5"/>
</dbReference>
<dbReference type="Proteomes" id="UP000059680">
    <property type="component" value="Chromosome 5"/>
</dbReference>
<dbReference type="GO" id="GO:0005789">
    <property type="term" value="C:endoplasmic reticulum membrane"/>
    <property type="evidence" value="ECO:0007669"/>
    <property type="project" value="UniProtKB-SubCell"/>
</dbReference>
<dbReference type="GO" id="GO:0003882">
    <property type="term" value="F:CDP-diacylglycerol-serine O-phosphatidyltransferase activity"/>
    <property type="evidence" value="ECO:0007669"/>
    <property type="project" value="UniProtKB-EC"/>
</dbReference>
<dbReference type="GO" id="GO:0106245">
    <property type="term" value="F:L-serine-phosphatidylethanolamine phosphatidyltransferase activity"/>
    <property type="evidence" value="ECO:0007669"/>
    <property type="project" value="InterPro"/>
</dbReference>
<dbReference type="GO" id="GO:0006646">
    <property type="term" value="P:phosphatidylethanolamine biosynthetic process"/>
    <property type="evidence" value="ECO:0007669"/>
    <property type="project" value="UniProtKB-UniPathway"/>
</dbReference>
<dbReference type="GO" id="GO:0006659">
    <property type="term" value="P:phosphatidylserine biosynthetic process"/>
    <property type="evidence" value="ECO:0007669"/>
    <property type="project" value="InterPro"/>
</dbReference>
<dbReference type="InterPro" id="IPR004277">
    <property type="entry name" value="PSS"/>
</dbReference>
<dbReference type="PANTHER" id="PTHR15362:SF20">
    <property type="entry name" value="CDP-DIACYLGLYCEROL--SERINE O-PHOSPHATIDYLTRANSFERASE 3"/>
    <property type="match status" value="1"/>
</dbReference>
<dbReference type="PANTHER" id="PTHR15362">
    <property type="entry name" value="PHOSPHATIDYLINOSITOL SYNTHASE"/>
    <property type="match status" value="1"/>
</dbReference>
<dbReference type="Pfam" id="PF03034">
    <property type="entry name" value="PSS"/>
    <property type="match status" value="1"/>
</dbReference>